<dbReference type="EMBL" id="X68348">
    <property type="protein sequence ID" value="CAA48417.1"/>
    <property type="molecule type" value="mRNA"/>
</dbReference>
<dbReference type="EMBL" id="AE001572">
    <property type="protein sequence ID" value="AAD19801.1"/>
    <property type="molecule type" value="Genomic_DNA"/>
</dbReference>
<dbReference type="EMBL" id="AE014297">
    <property type="protein sequence ID" value="AAF54088.1"/>
    <property type="molecule type" value="Genomic_DNA"/>
</dbReference>
<dbReference type="PIR" id="B43697">
    <property type="entry name" value="B43697"/>
</dbReference>
<dbReference type="RefSeq" id="NP_476794.1">
    <property type="nucleotide sequence ID" value="NM_057446.3"/>
</dbReference>
<dbReference type="SMR" id="P09090"/>
<dbReference type="FunCoup" id="P09090">
    <property type="interactions" value="2"/>
</dbReference>
<dbReference type="STRING" id="7227.FBpp0081171"/>
<dbReference type="PaxDb" id="7227-FBpp0081171"/>
<dbReference type="DNASU" id="40827"/>
<dbReference type="EnsemblMetazoa" id="FBtr0081671">
    <property type="protein sequence ID" value="FBpp0081171"/>
    <property type="gene ID" value="FBgn0004054"/>
</dbReference>
<dbReference type="GeneID" id="40827"/>
<dbReference type="KEGG" id="dme:Dmel_CG1048"/>
<dbReference type="AGR" id="FB:FBgn0004054"/>
<dbReference type="CTD" id="40827"/>
<dbReference type="FlyBase" id="FBgn0004054">
    <property type="gene designation" value="zen2"/>
</dbReference>
<dbReference type="VEuPathDB" id="VectorBase:FBgn0004054"/>
<dbReference type="eggNOG" id="KOG0489">
    <property type="taxonomic scope" value="Eukaryota"/>
</dbReference>
<dbReference type="GeneTree" id="ENSGT00940000156043"/>
<dbReference type="InParanoid" id="P09090"/>
<dbReference type="OMA" id="YDYLQEF"/>
<dbReference type="OrthoDB" id="6159439at2759"/>
<dbReference type="PhylomeDB" id="P09090"/>
<dbReference type="BioGRID-ORCS" id="40827">
    <property type="hits" value="0 hits in 1 CRISPR screen"/>
</dbReference>
<dbReference type="ChiTaRS" id="br">
    <property type="organism name" value="fly"/>
</dbReference>
<dbReference type="GenomeRNAi" id="40827"/>
<dbReference type="PRO" id="PR:P09090"/>
<dbReference type="Proteomes" id="UP000000803">
    <property type="component" value="Chromosome 3R"/>
</dbReference>
<dbReference type="Bgee" id="FBgn0004054">
    <property type="expression patterns" value="Expressed in foregut anlage in statu nascendi (Drosophila) and 7 other cell types or tissues"/>
</dbReference>
<dbReference type="ExpressionAtlas" id="P09090">
    <property type="expression patterns" value="differential"/>
</dbReference>
<dbReference type="GO" id="GO:0005634">
    <property type="term" value="C:nucleus"/>
    <property type="evidence" value="ECO:0000318"/>
    <property type="project" value="GO_Central"/>
</dbReference>
<dbReference type="GO" id="GO:0000981">
    <property type="term" value="F:DNA-binding transcription factor activity, RNA polymerase II-specific"/>
    <property type="evidence" value="ECO:0000318"/>
    <property type="project" value="GO_Central"/>
</dbReference>
<dbReference type="GO" id="GO:0000978">
    <property type="term" value="F:RNA polymerase II cis-regulatory region sequence-specific DNA binding"/>
    <property type="evidence" value="ECO:0000318"/>
    <property type="project" value="GO_Central"/>
</dbReference>
<dbReference type="GO" id="GO:0045944">
    <property type="term" value="P:positive regulation of transcription by RNA polymerase II"/>
    <property type="evidence" value="ECO:0007669"/>
    <property type="project" value="UniProtKB-ARBA"/>
</dbReference>
<dbReference type="GO" id="GO:0006357">
    <property type="term" value="P:regulation of transcription by RNA polymerase II"/>
    <property type="evidence" value="ECO:0000318"/>
    <property type="project" value="GO_Central"/>
</dbReference>
<dbReference type="CDD" id="cd00086">
    <property type="entry name" value="homeodomain"/>
    <property type="match status" value="1"/>
</dbReference>
<dbReference type="Gene3D" id="1.10.10.60">
    <property type="entry name" value="Homeodomain-like"/>
    <property type="match status" value="1"/>
</dbReference>
<dbReference type="InterPro" id="IPR001356">
    <property type="entry name" value="HD"/>
</dbReference>
<dbReference type="InterPro" id="IPR020479">
    <property type="entry name" value="HD_metazoa"/>
</dbReference>
<dbReference type="InterPro" id="IPR017970">
    <property type="entry name" value="Homeobox_CS"/>
</dbReference>
<dbReference type="InterPro" id="IPR009057">
    <property type="entry name" value="Homeodomain-like_sf"/>
</dbReference>
<dbReference type="PANTHER" id="PTHR45664:SF12">
    <property type="entry name" value="PANCREAS_DUODENUM HOMEOBOX PROTEIN 1"/>
    <property type="match status" value="1"/>
</dbReference>
<dbReference type="PANTHER" id="PTHR45664">
    <property type="entry name" value="PROTEIN ZERKNUELLT 1-RELATED"/>
    <property type="match status" value="1"/>
</dbReference>
<dbReference type="Pfam" id="PF00046">
    <property type="entry name" value="Homeodomain"/>
    <property type="match status" value="1"/>
</dbReference>
<dbReference type="PRINTS" id="PR00024">
    <property type="entry name" value="HOMEOBOX"/>
</dbReference>
<dbReference type="SMART" id="SM00389">
    <property type="entry name" value="HOX"/>
    <property type="match status" value="1"/>
</dbReference>
<dbReference type="SUPFAM" id="SSF46689">
    <property type="entry name" value="Homeodomain-like"/>
    <property type="match status" value="1"/>
</dbReference>
<dbReference type="PROSITE" id="PS00027">
    <property type="entry name" value="HOMEOBOX_1"/>
    <property type="match status" value="1"/>
</dbReference>
<dbReference type="PROSITE" id="PS50071">
    <property type="entry name" value="HOMEOBOX_2"/>
    <property type="match status" value="1"/>
</dbReference>
<proteinExistence type="evidence at transcript level"/>
<accession>P09090</accession>
<accession>Q9V3K6</accession>
<sequence length="252" mass="29027">MFAIQSENYFVDNYSVSDLMMYPCVELNVEAAPTATTRSSEKSKRSRTAFSSLQLIELEREFHLNKYLARTRRIEISQRLALTERQVKIWFQNRRMKLKKSTNRKGAIGALTTSIPLSSQSSEDLQKDDQIVERLLRYANTNVETAPLRQVDHGVLEEGQITPPYQSYDYLHEFSPEPMALPQLPFNEFDANWASSWLGLEPTIPIAENVIEHNTQDQPMIQNFCWDSNSSSASSSDILDVDYDFIQNLLNF</sequence>
<gene>
    <name type="primary">zen2</name>
    <name type="synonym">z2</name>
    <name type="ORF">CG1048</name>
</gene>
<comment type="function">
    <text evidence="2">Required for the differentiation of the dorsal-ventral pattern, and does not appear to be involved in the process of segmentation.</text>
</comment>
<comment type="subcellular location">
    <subcellularLocation>
        <location evidence="1 2">Nucleus</location>
    </subcellularLocation>
</comment>
<reference key="1">
    <citation type="journal article" date="1987" name="Genes Dev.">
        <title>Molecular characterization of the zerknullt region of the Antennapedia gene complex in Drosophila.</title>
        <authorList>
            <person name="Rushlow C."/>
            <person name="Doyle H."/>
            <person name="Hoey T."/>
            <person name="Levine M."/>
        </authorList>
    </citation>
    <scope>NUCLEOTIDE SEQUENCE [MRNA]</scope>
    <scope>FUNCTION</scope>
    <scope>SUBCELLULAR LOCATION</scope>
</reference>
<reference key="2">
    <citation type="submission" date="1999-01" db="EMBL/GenBank/DDBJ databases">
        <title>Complete sequence of the Antennapedia complex of Drosophila.</title>
        <authorList>
            <person name="Celniker S.E."/>
            <person name="Pfeiffer B."/>
            <person name="Knafels J."/>
            <person name="Martin C.H."/>
            <person name="Mayeda C.A."/>
            <person name="Palazzolo M.J."/>
        </authorList>
    </citation>
    <scope>NUCLEOTIDE SEQUENCE [GENOMIC DNA]</scope>
    <source>
        <strain>Berkeley</strain>
    </source>
</reference>
<reference key="3">
    <citation type="journal article" date="2000" name="Science">
        <title>The genome sequence of Drosophila melanogaster.</title>
        <authorList>
            <person name="Adams M.D."/>
            <person name="Celniker S.E."/>
            <person name="Holt R.A."/>
            <person name="Evans C.A."/>
            <person name="Gocayne J.D."/>
            <person name="Amanatides P.G."/>
            <person name="Scherer S.E."/>
            <person name="Li P.W."/>
            <person name="Hoskins R.A."/>
            <person name="Galle R.F."/>
            <person name="George R.A."/>
            <person name="Lewis S.E."/>
            <person name="Richards S."/>
            <person name="Ashburner M."/>
            <person name="Henderson S.N."/>
            <person name="Sutton G.G."/>
            <person name="Wortman J.R."/>
            <person name="Yandell M.D."/>
            <person name="Zhang Q."/>
            <person name="Chen L.X."/>
            <person name="Brandon R.C."/>
            <person name="Rogers Y.-H.C."/>
            <person name="Blazej R.G."/>
            <person name="Champe M."/>
            <person name="Pfeiffer B.D."/>
            <person name="Wan K.H."/>
            <person name="Doyle C."/>
            <person name="Baxter E.G."/>
            <person name="Helt G."/>
            <person name="Nelson C.R."/>
            <person name="Miklos G.L.G."/>
            <person name="Abril J.F."/>
            <person name="Agbayani A."/>
            <person name="An H.-J."/>
            <person name="Andrews-Pfannkoch C."/>
            <person name="Baldwin D."/>
            <person name="Ballew R.M."/>
            <person name="Basu A."/>
            <person name="Baxendale J."/>
            <person name="Bayraktaroglu L."/>
            <person name="Beasley E.M."/>
            <person name="Beeson K.Y."/>
            <person name="Benos P.V."/>
            <person name="Berman B.P."/>
            <person name="Bhandari D."/>
            <person name="Bolshakov S."/>
            <person name="Borkova D."/>
            <person name="Botchan M.R."/>
            <person name="Bouck J."/>
            <person name="Brokstein P."/>
            <person name="Brottier P."/>
            <person name="Burtis K.C."/>
            <person name="Busam D.A."/>
            <person name="Butler H."/>
            <person name="Cadieu E."/>
            <person name="Center A."/>
            <person name="Chandra I."/>
            <person name="Cherry J.M."/>
            <person name="Cawley S."/>
            <person name="Dahlke C."/>
            <person name="Davenport L.B."/>
            <person name="Davies P."/>
            <person name="de Pablos B."/>
            <person name="Delcher A."/>
            <person name="Deng Z."/>
            <person name="Mays A.D."/>
            <person name="Dew I."/>
            <person name="Dietz S.M."/>
            <person name="Dodson K."/>
            <person name="Doup L.E."/>
            <person name="Downes M."/>
            <person name="Dugan-Rocha S."/>
            <person name="Dunkov B.C."/>
            <person name="Dunn P."/>
            <person name="Durbin K.J."/>
            <person name="Evangelista C.C."/>
            <person name="Ferraz C."/>
            <person name="Ferriera S."/>
            <person name="Fleischmann W."/>
            <person name="Fosler C."/>
            <person name="Gabrielian A.E."/>
            <person name="Garg N.S."/>
            <person name="Gelbart W.M."/>
            <person name="Glasser K."/>
            <person name="Glodek A."/>
            <person name="Gong F."/>
            <person name="Gorrell J.H."/>
            <person name="Gu Z."/>
            <person name="Guan P."/>
            <person name="Harris M."/>
            <person name="Harris N.L."/>
            <person name="Harvey D.A."/>
            <person name="Heiman T.J."/>
            <person name="Hernandez J.R."/>
            <person name="Houck J."/>
            <person name="Hostin D."/>
            <person name="Houston K.A."/>
            <person name="Howland T.J."/>
            <person name="Wei M.-H."/>
            <person name="Ibegwam C."/>
            <person name="Jalali M."/>
            <person name="Kalush F."/>
            <person name="Karpen G.H."/>
            <person name="Ke Z."/>
            <person name="Kennison J.A."/>
            <person name="Ketchum K.A."/>
            <person name="Kimmel B.E."/>
            <person name="Kodira C.D."/>
            <person name="Kraft C.L."/>
            <person name="Kravitz S."/>
            <person name="Kulp D."/>
            <person name="Lai Z."/>
            <person name="Lasko P."/>
            <person name="Lei Y."/>
            <person name="Levitsky A.A."/>
            <person name="Li J.H."/>
            <person name="Li Z."/>
            <person name="Liang Y."/>
            <person name="Lin X."/>
            <person name="Liu X."/>
            <person name="Mattei B."/>
            <person name="McIntosh T.C."/>
            <person name="McLeod M.P."/>
            <person name="McPherson D."/>
            <person name="Merkulov G."/>
            <person name="Milshina N.V."/>
            <person name="Mobarry C."/>
            <person name="Morris J."/>
            <person name="Moshrefi A."/>
            <person name="Mount S.M."/>
            <person name="Moy M."/>
            <person name="Murphy B."/>
            <person name="Murphy L."/>
            <person name="Muzny D.M."/>
            <person name="Nelson D.L."/>
            <person name="Nelson D.R."/>
            <person name="Nelson K.A."/>
            <person name="Nixon K."/>
            <person name="Nusskern D.R."/>
            <person name="Pacleb J.M."/>
            <person name="Palazzolo M."/>
            <person name="Pittman G.S."/>
            <person name="Pan S."/>
            <person name="Pollard J."/>
            <person name="Puri V."/>
            <person name="Reese M.G."/>
            <person name="Reinert K."/>
            <person name="Remington K."/>
            <person name="Saunders R.D.C."/>
            <person name="Scheeler F."/>
            <person name="Shen H."/>
            <person name="Shue B.C."/>
            <person name="Siden-Kiamos I."/>
            <person name="Simpson M."/>
            <person name="Skupski M.P."/>
            <person name="Smith T.J."/>
            <person name="Spier E."/>
            <person name="Spradling A.C."/>
            <person name="Stapleton M."/>
            <person name="Strong R."/>
            <person name="Sun E."/>
            <person name="Svirskas R."/>
            <person name="Tector C."/>
            <person name="Turner R."/>
            <person name="Venter E."/>
            <person name="Wang A.H."/>
            <person name="Wang X."/>
            <person name="Wang Z.-Y."/>
            <person name="Wassarman D.A."/>
            <person name="Weinstock G.M."/>
            <person name="Weissenbach J."/>
            <person name="Williams S.M."/>
            <person name="Woodage T."/>
            <person name="Worley K.C."/>
            <person name="Wu D."/>
            <person name="Yang S."/>
            <person name="Yao Q.A."/>
            <person name="Ye J."/>
            <person name="Yeh R.-F."/>
            <person name="Zaveri J.S."/>
            <person name="Zhan M."/>
            <person name="Zhang G."/>
            <person name="Zhao Q."/>
            <person name="Zheng L."/>
            <person name="Zheng X.H."/>
            <person name="Zhong F.N."/>
            <person name="Zhong W."/>
            <person name="Zhou X."/>
            <person name="Zhu S.C."/>
            <person name="Zhu X."/>
            <person name="Smith H.O."/>
            <person name="Gibbs R.A."/>
            <person name="Myers E.W."/>
            <person name="Rubin G.M."/>
            <person name="Venter J.C."/>
        </authorList>
    </citation>
    <scope>NUCLEOTIDE SEQUENCE [LARGE SCALE GENOMIC DNA]</scope>
    <source>
        <strain>Berkeley</strain>
    </source>
</reference>
<reference key="4">
    <citation type="journal article" date="2002" name="Genome Biol.">
        <title>Annotation of the Drosophila melanogaster euchromatic genome: a systematic review.</title>
        <authorList>
            <person name="Misra S."/>
            <person name="Crosby M.A."/>
            <person name="Mungall C.J."/>
            <person name="Matthews B.B."/>
            <person name="Campbell K.S."/>
            <person name="Hradecky P."/>
            <person name="Huang Y."/>
            <person name="Kaminker J.S."/>
            <person name="Millburn G.H."/>
            <person name="Prochnik S.E."/>
            <person name="Smith C.D."/>
            <person name="Tupy J.L."/>
            <person name="Whitfield E.J."/>
            <person name="Bayraktaroglu L."/>
            <person name="Berman B.P."/>
            <person name="Bettencourt B.R."/>
            <person name="Celniker S.E."/>
            <person name="de Grey A.D.N.J."/>
            <person name="Drysdale R.A."/>
            <person name="Harris N.L."/>
            <person name="Richter J."/>
            <person name="Russo S."/>
            <person name="Schroeder A.J."/>
            <person name="Shu S.Q."/>
            <person name="Stapleton M."/>
            <person name="Yamada C."/>
            <person name="Ashburner M."/>
            <person name="Gelbart W.M."/>
            <person name="Rubin G.M."/>
            <person name="Lewis S.E."/>
        </authorList>
    </citation>
    <scope>GENOME REANNOTATION</scope>
    <source>
        <strain>Berkeley</strain>
    </source>
</reference>
<feature type="chain" id="PRO_0000049113" description="Protein zerknuellt 2">
    <location>
        <begin position="1"/>
        <end position="252"/>
    </location>
</feature>
<feature type="DNA-binding region" description="Homeobox" evidence="1">
    <location>
        <begin position="43"/>
        <end position="102"/>
    </location>
</feature>
<feature type="sequence conflict" description="In Ref. 1; CAA48417." evidence="3" ref="1">
    <original>L</original>
    <variation>F</variation>
    <location>
        <position position="27"/>
    </location>
</feature>
<feature type="sequence conflict" description="In Ref. 1; CAA48417." evidence="3" ref="1">
    <original>P</original>
    <variation>R</variation>
    <location>
        <position position="33"/>
    </location>
</feature>
<protein>
    <recommendedName>
        <fullName>Protein zerknuellt 2</fullName>
        <shortName>ZEN-2</shortName>
    </recommendedName>
</protein>
<organism>
    <name type="scientific">Drosophila melanogaster</name>
    <name type="common">Fruit fly</name>
    <dbReference type="NCBI Taxonomy" id="7227"/>
    <lineage>
        <taxon>Eukaryota</taxon>
        <taxon>Metazoa</taxon>
        <taxon>Ecdysozoa</taxon>
        <taxon>Arthropoda</taxon>
        <taxon>Hexapoda</taxon>
        <taxon>Insecta</taxon>
        <taxon>Pterygota</taxon>
        <taxon>Neoptera</taxon>
        <taxon>Endopterygota</taxon>
        <taxon>Diptera</taxon>
        <taxon>Brachycera</taxon>
        <taxon>Muscomorpha</taxon>
        <taxon>Ephydroidea</taxon>
        <taxon>Drosophilidae</taxon>
        <taxon>Drosophila</taxon>
        <taxon>Sophophora</taxon>
    </lineage>
</organism>
<evidence type="ECO:0000255" key="1">
    <source>
        <dbReference type="PROSITE-ProRule" id="PRU00108"/>
    </source>
</evidence>
<evidence type="ECO:0000269" key="2">
    <source>
    </source>
</evidence>
<evidence type="ECO:0000305" key="3"/>
<name>ZEN2_DROME</name>
<keyword id="KW-0217">Developmental protein</keyword>
<keyword id="KW-0238">DNA-binding</keyword>
<keyword id="KW-0371">Homeobox</keyword>
<keyword id="KW-0539">Nucleus</keyword>
<keyword id="KW-1185">Reference proteome</keyword>
<keyword id="KW-0804">Transcription</keyword>
<keyword id="KW-0805">Transcription regulation</keyword>